<sequence length="95" mass="10736">MTKSELIERLASQQSHIPAKAVEDAVKEMLEHMASTLAQGERIEIRGFGSFSLHYRAPRTGRNPKTGDKVELEGKYVPHFKPGKELRDRANIYEG</sequence>
<keyword id="KW-0233">DNA recombination</keyword>
<keyword id="KW-0238">DNA-binding</keyword>
<keyword id="KW-0804">Transcription</keyword>
<keyword id="KW-0805">Transcription regulation</keyword>
<keyword id="KW-0810">Translation regulation</keyword>
<gene>
    <name evidence="1" type="primary">ihfB</name>
    <name evidence="1" type="synonym">himD</name>
    <name type="ordered locus">KPN78578_09140</name>
    <name type="ORF">KPN_00939</name>
</gene>
<comment type="function">
    <text evidence="1">This protein is one of the two subunits of integration host factor, a specific DNA-binding protein that functions in genetic recombination as well as in transcriptional and translational control.</text>
</comment>
<comment type="subunit">
    <text evidence="1">Heterodimer of an alpha and a beta chain.</text>
</comment>
<comment type="similarity">
    <text evidence="1">Belongs to the bacterial histone-like protein family.</text>
</comment>
<reference key="1">
    <citation type="submission" date="2006-09" db="EMBL/GenBank/DDBJ databases">
        <authorList>
            <consortium name="The Klebsiella pneumonia Genome Sequencing Project"/>
            <person name="McClelland M."/>
            <person name="Sanderson E.K."/>
            <person name="Spieth J."/>
            <person name="Clifton W.S."/>
            <person name="Latreille P."/>
            <person name="Sabo A."/>
            <person name="Pepin K."/>
            <person name="Bhonagiri V."/>
            <person name="Porwollik S."/>
            <person name="Ali J."/>
            <person name="Wilson R.K."/>
        </authorList>
    </citation>
    <scope>NUCLEOTIDE SEQUENCE [LARGE SCALE GENOMIC DNA]</scope>
    <source>
        <strain>ATCC 700721 / MGH 78578</strain>
    </source>
</reference>
<feature type="chain" id="PRO_1000060614" description="Integration host factor subunit beta">
    <location>
        <begin position="1"/>
        <end position="95"/>
    </location>
</feature>
<dbReference type="EMBL" id="CP000647">
    <property type="protein sequence ID" value="ABR76375.1"/>
    <property type="molecule type" value="Genomic_DNA"/>
</dbReference>
<dbReference type="RefSeq" id="WP_002898165.1">
    <property type="nucleotide sequence ID" value="NC_009648.1"/>
</dbReference>
<dbReference type="SMR" id="A6T704"/>
<dbReference type="STRING" id="272620.KPN_00939"/>
<dbReference type="jPOST" id="A6T704"/>
<dbReference type="PaxDb" id="272620-KPN_00939"/>
<dbReference type="EnsemblBacteria" id="ABR76375">
    <property type="protein sequence ID" value="ABR76375"/>
    <property type="gene ID" value="KPN_00939"/>
</dbReference>
<dbReference type="GeneID" id="93253197"/>
<dbReference type="KEGG" id="kpn:KPN_00939"/>
<dbReference type="HOGENOM" id="CLU_105066_2_0_6"/>
<dbReference type="Proteomes" id="UP000000265">
    <property type="component" value="Chromosome"/>
</dbReference>
<dbReference type="GO" id="GO:0005694">
    <property type="term" value="C:chromosome"/>
    <property type="evidence" value="ECO:0007669"/>
    <property type="project" value="InterPro"/>
</dbReference>
<dbReference type="GO" id="GO:0005829">
    <property type="term" value="C:cytosol"/>
    <property type="evidence" value="ECO:0007669"/>
    <property type="project" value="TreeGrafter"/>
</dbReference>
<dbReference type="GO" id="GO:0003677">
    <property type="term" value="F:DNA binding"/>
    <property type="evidence" value="ECO:0007669"/>
    <property type="project" value="UniProtKB-UniRule"/>
</dbReference>
<dbReference type="GO" id="GO:0030527">
    <property type="term" value="F:structural constituent of chromatin"/>
    <property type="evidence" value="ECO:0007669"/>
    <property type="project" value="InterPro"/>
</dbReference>
<dbReference type="GO" id="GO:0006310">
    <property type="term" value="P:DNA recombination"/>
    <property type="evidence" value="ECO:0007669"/>
    <property type="project" value="UniProtKB-UniRule"/>
</dbReference>
<dbReference type="GO" id="GO:0006355">
    <property type="term" value="P:regulation of DNA-templated transcription"/>
    <property type="evidence" value="ECO:0007669"/>
    <property type="project" value="UniProtKB-UniRule"/>
</dbReference>
<dbReference type="GO" id="GO:0006417">
    <property type="term" value="P:regulation of translation"/>
    <property type="evidence" value="ECO:0007669"/>
    <property type="project" value="UniProtKB-UniRule"/>
</dbReference>
<dbReference type="CDD" id="cd13836">
    <property type="entry name" value="IHF_B"/>
    <property type="match status" value="1"/>
</dbReference>
<dbReference type="FunFam" id="4.10.520.10:FF:000003">
    <property type="entry name" value="Integration host factor subunit beta"/>
    <property type="match status" value="1"/>
</dbReference>
<dbReference type="Gene3D" id="4.10.520.10">
    <property type="entry name" value="IHF-like DNA-binding proteins"/>
    <property type="match status" value="1"/>
</dbReference>
<dbReference type="HAMAP" id="MF_00381">
    <property type="entry name" value="IHF_beta"/>
    <property type="match status" value="1"/>
</dbReference>
<dbReference type="InterPro" id="IPR000119">
    <property type="entry name" value="Hist_DNA-bd"/>
</dbReference>
<dbReference type="InterPro" id="IPR020816">
    <property type="entry name" value="Histone-like_DNA-bd_CS"/>
</dbReference>
<dbReference type="InterPro" id="IPR010992">
    <property type="entry name" value="IHF-like_DNA-bd_dom_sf"/>
</dbReference>
<dbReference type="InterPro" id="IPR005685">
    <property type="entry name" value="IHF_beta"/>
</dbReference>
<dbReference type="NCBIfam" id="TIGR00988">
    <property type="entry name" value="hip"/>
    <property type="match status" value="1"/>
</dbReference>
<dbReference type="NCBIfam" id="NF001222">
    <property type="entry name" value="PRK00199.1"/>
    <property type="match status" value="1"/>
</dbReference>
<dbReference type="PANTHER" id="PTHR33175">
    <property type="entry name" value="DNA-BINDING PROTEIN HU"/>
    <property type="match status" value="1"/>
</dbReference>
<dbReference type="PANTHER" id="PTHR33175:SF5">
    <property type="entry name" value="INTEGRATION HOST FACTOR SUBUNIT BETA"/>
    <property type="match status" value="1"/>
</dbReference>
<dbReference type="Pfam" id="PF00216">
    <property type="entry name" value="Bac_DNA_binding"/>
    <property type="match status" value="1"/>
</dbReference>
<dbReference type="PRINTS" id="PR01727">
    <property type="entry name" value="DNABINDINGHU"/>
</dbReference>
<dbReference type="SMART" id="SM00411">
    <property type="entry name" value="BHL"/>
    <property type="match status" value="1"/>
</dbReference>
<dbReference type="SUPFAM" id="SSF47729">
    <property type="entry name" value="IHF-like DNA-binding proteins"/>
    <property type="match status" value="1"/>
</dbReference>
<dbReference type="PROSITE" id="PS00045">
    <property type="entry name" value="HISTONE_LIKE"/>
    <property type="match status" value="1"/>
</dbReference>
<evidence type="ECO:0000255" key="1">
    <source>
        <dbReference type="HAMAP-Rule" id="MF_00381"/>
    </source>
</evidence>
<organism>
    <name type="scientific">Klebsiella pneumoniae subsp. pneumoniae (strain ATCC 700721 / MGH 78578)</name>
    <dbReference type="NCBI Taxonomy" id="272620"/>
    <lineage>
        <taxon>Bacteria</taxon>
        <taxon>Pseudomonadati</taxon>
        <taxon>Pseudomonadota</taxon>
        <taxon>Gammaproteobacteria</taxon>
        <taxon>Enterobacterales</taxon>
        <taxon>Enterobacteriaceae</taxon>
        <taxon>Klebsiella/Raoultella group</taxon>
        <taxon>Klebsiella</taxon>
        <taxon>Klebsiella pneumoniae complex</taxon>
    </lineage>
</organism>
<proteinExistence type="inferred from homology"/>
<name>IHFB_KLEP7</name>
<protein>
    <recommendedName>
        <fullName evidence="1">Integration host factor subunit beta</fullName>
        <shortName evidence="1">IHF-beta</shortName>
    </recommendedName>
</protein>
<accession>A6T704</accession>